<organism>
    <name type="scientific">Brucella abortus (strain 2308)</name>
    <dbReference type="NCBI Taxonomy" id="359391"/>
    <lineage>
        <taxon>Bacteria</taxon>
        <taxon>Pseudomonadati</taxon>
        <taxon>Pseudomonadota</taxon>
        <taxon>Alphaproteobacteria</taxon>
        <taxon>Hyphomicrobiales</taxon>
        <taxon>Brucellaceae</taxon>
        <taxon>Brucella/Ochrobactrum group</taxon>
        <taxon>Brucella</taxon>
    </lineage>
</organism>
<proteinExistence type="inferred from homology"/>
<dbReference type="EC" id="2.7.1.2" evidence="1"/>
<dbReference type="EMBL" id="AM040265">
    <property type="protein sequence ID" value="CAJ13176.1"/>
    <property type="molecule type" value="Genomic_DNA"/>
</dbReference>
<dbReference type="RefSeq" id="WP_002967381.1">
    <property type="nucleotide sequence ID" value="NZ_KN046823.1"/>
</dbReference>
<dbReference type="SMR" id="Q2YJN9"/>
<dbReference type="STRING" id="359391.BAB2_1010"/>
<dbReference type="KEGG" id="bmf:BAB2_1010"/>
<dbReference type="PATRIC" id="fig|359391.11.peg.697"/>
<dbReference type="HOGENOM" id="CLU_042582_1_0_5"/>
<dbReference type="PhylomeDB" id="Q2YJN9"/>
<dbReference type="Proteomes" id="UP000002719">
    <property type="component" value="Chromosome II"/>
</dbReference>
<dbReference type="GO" id="GO:0005829">
    <property type="term" value="C:cytosol"/>
    <property type="evidence" value="ECO:0007669"/>
    <property type="project" value="TreeGrafter"/>
</dbReference>
<dbReference type="GO" id="GO:0005524">
    <property type="term" value="F:ATP binding"/>
    <property type="evidence" value="ECO:0007669"/>
    <property type="project" value="UniProtKB-UniRule"/>
</dbReference>
<dbReference type="GO" id="GO:0005536">
    <property type="term" value="F:D-glucose binding"/>
    <property type="evidence" value="ECO:0007669"/>
    <property type="project" value="InterPro"/>
</dbReference>
<dbReference type="GO" id="GO:0004340">
    <property type="term" value="F:glucokinase activity"/>
    <property type="evidence" value="ECO:0007669"/>
    <property type="project" value="UniProtKB-UniRule"/>
</dbReference>
<dbReference type="GO" id="GO:0006096">
    <property type="term" value="P:glycolytic process"/>
    <property type="evidence" value="ECO:0007669"/>
    <property type="project" value="UniProtKB-UniRule"/>
</dbReference>
<dbReference type="CDD" id="cd24008">
    <property type="entry name" value="ASKHA_NBD_GLK"/>
    <property type="match status" value="1"/>
</dbReference>
<dbReference type="Gene3D" id="3.30.420.40">
    <property type="match status" value="1"/>
</dbReference>
<dbReference type="Gene3D" id="3.40.367.20">
    <property type="match status" value="1"/>
</dbReference>
<dbReference type="HAMAP" id="MF_00524">
    <property type="entry name" value="Glucokinase"/>
    <property type="match status" value="1"/>
</dbReference>
<dbReference type="InterPro" id="IPR043129">
    <property type="entry name" value="ATPase_NBD"/>
</dbReference>
<dbReference type="InterPro" id="IPR050201">
    <property type="entry name" value="Bacterial_glucokinase"/>
</dbReference>
<dbReference type="InterPro" id="IPR003836">
    <property type="entry name" value="Glucokinase"/>
</dbReference>
<dbReference type="NCBIfam" id="TIGR00749">
    <property type="entry name" value="glk"/>
    <property type="match status" value="1"/>
</dbReference>
<dbReference type="NCBIfam" id="NF001417">
    <property type="entry name" value="PRK00292.1-4"/>
    <property type="match status" value="1"/>
</dbReference>
<dbReference type="PANTHER" id="PTHR47690">
    <property type="entry name" value="GLUCOKINASE"/>
    <property type="match status" value="1"/>
</dbReference>
<dbReference type="PANTHER" id="PTHR47690:SF1">
    <property type="entry name" value="GLUCOKINASE"/>
    <property type="match status" value="1"/>
</dbReference>
<dbReference type="Pfam" id="PF02685">
    <property type="entry name" value="Glucokinase"/>
    <property type="match status" value="1"/>
</dbReference>
<dbReference type="SUPFAM" id="SSF53067">
    <property type="entry name" value="Actin-like ATPase domain"/>
    <property type="match status" value="1"/>
</dbReference>
<comment type="catalytic activity">
    <reaction evidence="1">
        <text>D-glucose + ATP = D-glucose 6-phosphate + ADP + H(+)</text>
        <dbReference type="Rhea" id="RHEA:17825"/>
        <dbReference type="ChEBI" id="CHEBI:4167"/>
        <dbReference type="ChEBI" id="CHEBI:15378"/>
        <dbReference type="ChEBI" id="CHEBI:30616"/>
        <dbReference type="ChEBI" id="CHEBI:61548"/>
        <dbReference type="ChEBI" id="CHEBI:456216"/>
        <dbReference type="EC" id="2.7.1.2"/>
    </reaction>
</comment>
<comment type="subcellular location">
    <subcellularLocation>
        <location evidence="1">Cytoplasm</location>
    </subcellularLocation>
</comment>
<comment type="similarity">
    <text evidence="1">Belongs to the bacterial glucokinase family.</text>
</comment>
<gene>
    <name evidence="1" type="primary">glk</name>
    <name type="ordered locus">BAB2_1010</name>
</gene>
<evidence type="ECO:0000255" key="1">
    <source>
        <dbReference type="HAMAP-Rule" id="MF_00524"/>
    </source>
</evidence>
<feature type="chain" id="PRO_0000268768" description="Glucokinase">
    <location>
        <begin position="1"/>
        <end position="343"/>
    </location>
</feature>
<feature type="binding site" evidence="1">
    <location>
        <begin position="18"/>
        <end position="23"/>
    </location>
    <ligand>
        <name>ATP</name>
        <dbReference type="ChEBI" id="CHEBI:30616"/>
    </ligand>
</feature>
<name>GLK_BRUA2</name>
<accession>Q2YJN9</accession>
<reference key="1">
    <citation type="journal article" date="2005" name="Infect. Immun.">
        <title>Whole-genome analyses of speciation events in pathogenic Brucellae.</title>
        <authorList>
            <person name="Chain P.S."/>
            <person name="Comerci D.J."/>
            <person name="Tolmasky M.E."/>
            <person name="Larimer F.W."/>
            <person name="Malfatti S.A."/>
            <person name="Vergez L.M."/>
            <person name="Aguero F."/>
            <person name="Land M.L."/>
            <person name="Ugalde R.A."/>
            <person name="Garcia E."/>
        </authorList>
    </citation>
    <scope>NUCLEOTIDE SEQUENCE [LARGE SCALE GENOMIC DNA]</scope>
    <source>
        <strain>2308</strain>
    </source>
</reference>
<keyword id="KW-0067">ATP-binding</keyword>
<keyword id="KW-0963">Cytoplasm</keyword>
<keyword id="KW-0324">Glycolysis</keyword>
<keyword id="KW-0418">Kinase</keyword>
<keyword id="KW-0547">Nucleotide-binding</keyword>
<keyword id="KW-1185">Reference proteome</keyword>
<keyword id="KW-0808">Transferase</keyword>
<protein>
    <recommendedName>
        <fullName evidence="1">Glucokinase</fullName>
        <ecNumber evidence="1">2.7.1.2</ecNumber>
    </recommendedName>
    <alternativeName>
        <fullName evidence="1">Glucose kinase</fullName>
    </alternativeName>
</protein>
<sequence>MQAIIDAEQSFKFPVLVGDIGGTNARFSILVDSNAEPKEFPVLQTADYATIDEAIQHAILDQTAIQPRSVILAVAGPVDGDEIDLTNCDWVVRPKKMIADLGFEDVTVLNDFEAQALAVVSLEGHHMEQIGGKPEEAVATRVVLGPGTGLGVAGLFRTRHAWVPVPGEGGHIDIGPRTERDYQIFPHIERIEGRVTGEQILSGRGLRNLYLGICAADKITPTLETPVDITSAGLDGSNPQAAETLDLFATYLGRLAGDLALIFMAHGGVYLSGGIPVRILSALKAGSFRATFEDKAPHKAIMRDIPVRVITYQLAALTGLSAFARTPSRFEVSTEGRRWRMRR</sequence>